<sequence length="171" mass="19728">MDKKSLYKYLLLRSTGDMHRAKSPTIMTRVTNNVYLGNYKNAMDAPSSEVKFKYVLNLTMDKYTLPNSNINIIHIPLVDDTTTDISKYFDDVTAFLSKCDQRNEPVLVHCVAGVNRSGAMILAYLMSKNKESSPMLYFLYVYHSMRDLRGAFVENPSFKRQIIEKYVIDKN</sequence>
<proteinExistence type="evidence at protein level"/>
<protein>
    <recommendedName>
        <fullName>Dual specificity protein phosphatase OPG106</fullName>
        <ecNumber>3.1.3.-</ecNumber>
        <ecNumber>3.1.3.48</ecNumber>
    </recommendedName>
</protein>
<dbReference type="EC" id="3.1.3.-"/>
<dbReference type="EC" id="3.1.3.48"/>
<dbReference type="EMBL" id="KC257461">
    <property type="protein sequence ID" value="AGF36995.1"/>
    <property type="molecule type" value="Genomic_DNA"/>
</dbReference>
<dbReference type="EMBL" id="MT903340">
    <property type="protein sequence ID" value="QNP12961.1"/>
    <property type="molecule type" value="Genomic_DNA"/>
</dbReference>
<dbReference type="RefSeq" id="NP_536518.1">
    <property type="nucleotide sequence ID" value="NC_003310.1"/>
</dbReference>
<dbReference type="RefSeq" id="YP_010377088.1">
    <property type="nucleotide sequence ID" value="NC_063383.1"/>
</dbReference>
<dbReference type="PDB" id="8GZ4">
    <property type="method" value="X-ray"/>
    <property type="resolution" value="1.80 A"/>
    <property type="chains" value="A=1-171"/>
</dbReference>
<dbReference type="PDBsum" id="8GZ4"/>
<dbReference type="SMR" id="A0A7H0DN78"/>
<dbReference type="GeneID" id="72551501"/>
<dbReference type="GeneID" id="928997"/>
<dbReference type="KEGG" id="vg:928997"/>
<dbReference type="Proteomes" id="UP000516359">
    <property type="component" value="Genome"/>
</dbReference>
<dbReference type="GO" id="GO:0030430">
    <property type="term" value="C:host cell cytoplasm"/>
    <property type="evidence" value="ECO:0007669"/>
    <property type="project" value="UniProtKB-SubCell"/>
</dbReference>
<dbReference type="GO" id="GO:0044423">
    <property type="term" value="C:virion component"/>
    <property type="evidence" value="ECO:0007669"/>
    <property type="project" value="UniProtKB-KW"/>
</dbReference>
<dbReference type="GO" id="GO:0004721">
    <property type="term" value="F:phosphoprotein phosphatase activity"/>
    <property type="evidence" value="ECO:0007669"/>
    <property type="project" value="UniProtKB-KW"/>
</dbReference>
<dbReference type="GO" id="GO:0043409">
    <property type="term" value="P:negative regulation of MAPK cascade"/>
    <property type="evidence" value="ECO:0007669"/>
    <property type="project" value="TreeGrafter"/>
</dbReference>
<dbReference type="GO" id="GO:0052170">
    <property type="term" value="P:symbiont-mediated suppression of host innate immune response"/>
    <property type="evidence" value="ECO:0007669"/>
    <property type="project" value="UniProtKB-KW"/>
</dbReference>
<dbReference type="GO" id="GO:0039563">
    <property type="term" value="P:symbiont-mediated suppression of host JAK-STAT cascade via inhibition of STAT1 activity"/>
    <property type="evidence" value="ECO:0007669"/>
    <property type="project" value="UniProtKB-KW"/>
</dbReference>
<dbReference type="GO" id="GO:0039502">
    <property type="term" value="P:symbiont-mediated suppression of host type I interferon-mediated signaling pathway"/>
    <property type="evidence" value="ECO:0007669"/>
    <property type="project" value="UniProtKB-KW"/>
</dbReference>
<dbReference type="CDD" id="cd14498">
    <property type="entry name" value="DSP"/>
    <property type="match status" value="1"/>
</dbReference>
<dbReference type="Gene3D" id="3.90.190.10">
    <property type="entry name" value="Protein tyrosine phosphatase superfamily"/>
    <property type="match status" value="1"/>
</dbReference>
<dbReference type="InterPro" id="IPR000340">
    <property type="entry name" value="Dual-sp_phosphatase_cat-dom"/>
</dbReference>
<dbReference type="InterPro" id="IPR029021">
    <property type="entry name" value="Prot-tyrosine_phosphatase-like"/>
</dbReference>
<dbReference type="InterPro" id="IPR016130">
    <property type="entry name" value="Tyr_Pase_AS"/>
</dbReference>
<dbReference type="InterPro" id="IPR003595">
    <property type="entry name" value="Tyr_Pase_cat"/>
</dbReference>
<dbReference type="InterPro" id="IPR000387">
    <property type="entry name" value="Tyr_Pase_dom"/>
</dbReference>
<dbReference type="InterPro" id="IPR020422">
    <property type="entry name" value="TYR_PHOSPHATASE_DUAL_dom"/>
</dbReference>
<dbReference type="PANTHER" id="PTHR10159">
    <property type="entry name" value="DUAL SPECIFICITY PROTEIN PHOSPHATASE"/>
    <property type="match status" value="1"/>
</dbReference>
<dbReference type="PANTHER" id="PTHR10159:SF519">
    <property type="entry name" value="DUAL SPECIFICITY PROTEIN PHOSPHATASE MPK3"/>
    <property type="match status" value="1"/>
</dbReference>
<dbReference type="Pfam" id="PF00782">
    <property type="entry name" value="DSPc"/>
    <property type="match status" value="1"/>
</dbReference>
<dbReference type="SMART" id="SM00195">
    <property type="entry name" value="DSPc"/>
    <property type="match status" value="1"/>
</dbReference>
<dbReference type="SMART" id="SM00404">
    <property type="entry name" value="PTPc_motif"/>
    <property type="match status" value="1"/>
</dbReference>
<dbReference type="SUPFAM" id="SSF52799">
    <property type="entry name" value="(Phosphotyrosine protein) phosphatases II"/>
    <property type="match status" value="1"/>
</dbReference>
<dbReference type="PROSITE" id="PS00383">
    <property type="entry name" value="TYR_PHOSPHATASE_1"/>
    <property type="match status" value="1"/>
</dbReference>
<dbReference type="PROSITE" id="PS50056">
    <property type="entry name" value="TYR_PHOSPHATASE_2"/>
    <property type="match status" value="1"/>
</dbReference>
<dbReference type="PROSITE" id="PS50054">
    <property type="entry name" value="TYR_PHOSPHATASE_DUAL"/>
    <property type="match status" value="1"/>
</dbReference>
<gene>
    <name type="primary">OPG106</name>
    <name type="ORF">MPXVgp091</name>
</gene>
<name>DUSP_MONPV</name>
<reference key="1">
    <citation type="journal article" date="2013" name="Am. J. Trop. Med. Hyg.">
        <title>Detection of human monkeypox in the republic of the congo following intensive community education.</title>
        <authorList>
            <person name="Reynolds M.G."/>
            <person name="Emerson G.L."/>
            <person name="Pukuta E."/>
            <person name="Karhemere S."/>
            <person name="Muyembe J.J."/>
            <person name="Bikindou A."/>
            <person name="McCollum A.M."/>
            <person name="Moses C."/>
            <person name="Wilkins K."/>
            <person name="Zhao H."/>
            <person name="Damon I.K."/>
            <person name="Karem K.L."/>
            <person name="Li Y."/>
            <person name="Carroll D.S."/>
            <person name="Mombouli J.V."/>
        </authorList>
    </citation>
    <scope>NUCLEOTIDE SEQUENCE [GENOMIC DNA]</scope>
    <source>
        <strain>ROC2010</strain>
    </source>
</reference>
<reference key="2">
    <citation type="journal article" date="2022" name="J. Infect. Dis.">
        <title>Exportation of Monkeypox virus from the African continent.</title>
        <authorList>
            <person name="Mauldin M.R."/>
            <person name="McCollum A.M."/>
            <person name="Nakazawa Y.J."/>
            <person name="Mandra A."/>
            <person name="Whitehouse E.R."/>
            <person name="Davidson W."/>
            <person name="Zhao H."/>
            <person name="Gao J."/>
            <person name="Li Y."/>
            <person name="Doty J."/>
            <person name="Yinka-Ogunleye A."/>
            <person name="Akinpelu A."/>
            <person name="Aruna O."/>
            <person name="Naidoo D."/>
            <person name="Lewandowski K."/>
            <person name="Afrough B."/>
            <person name="Graham V."/>
            <person name="Aarons E."/>
            <person name="Hewson R."/>
            <person name="Vipond R."/>
            <person name="Dunning J."/>
            <person name="Chand M."/>
            <person name="Brown C."/>
            <person name="Cohen-Gihon I."/>
            <person name="Erez N."/>
            <person name="Shifman O."/>
            <person name="Israeli O."/>
            <person name="Sharon M."/>
            <person name="Schwartz E."/>
            <person name="Beth-Din A."/>
            <person name="Zvi A."/>
            <person name="Mak T.M."/>
            <person name="Ng Y.K."/>
            <person name="Cui L."/>
            <person name="Lin R.T.P."/>
            <person name="Olson V.A."/>
            <person name="Brooks T."/>
            <person name="Paran N."/>
            <person name="Ihekweazu C."/>
            <person name="Reynolds M.G."/>
        </authorList>
    </citation>
    <scope>NUCLEOTIDE SEQUENCE [LARGE SCALE GENOMIC DNA]</scope>
    <source>
        <strain>MPXV-M5312_HM12_Rivers</strain>
    </source>
</reference>
<evidence type="ECO:0000250" key="1">
    <source>
        <dbReference type="UniProtKB" id="P07239"/>
    </source>
</evidence>
<evidence type="ECO:0000305" key="2"/>
<evidence type="ECO:0007829" key="3">
    <source>
        <dbReference type="PDB" id="8GZ4"/>
    </source>
</evidence>
<organism>
    <name type="scientific">Monkeypox virus</name>
    <dbReference type="NCBI Taxonomy" id="10244"/>
    <lineage>
        <taxon>Viruses</taxon>
        <taxon>Varidnaviria</taxon>
        <taxon>Bamfordvirae</taxon>
        <taxon>Nucleocytoviricota</taxon>
        <taxon>Pokkesviricetes</taxon>
        <taxon>Chitovirales</taxon>
        <taxon>Poxviridae</taxon>
        <taxon>Chordopoxvirinae</taxon>
        <taxon>Orthopoxvirus</taxon>
    </lineage>
</organism>
<keyword id="KW-0002">3D-structure</keyword>
<keyword id="KW-1035">Host cytoplasm</keyword>
<keyword id="KW-0945">Host-virus interaction</keyword>
<keyword id="KW-0378">Hydrolase</keyword>
<keyword id="KW-1090">Inhibition of host innate immune response by virus</keyword>
<keyword id="KW-1114">Inhibition of host interferon signaling pathway by virus</keyword>
<keyword id="KW-1105">Inhibition of host STAT1 by virus</keyword>
<keyword id="KW-0922">Interferon antiviral system evasion</keyword>
<keyword id="KW-0426">Late protein</keyword>
<keyword id="KW-0904">Protein phosphatase</keyword>
<keyword id="KW-1185">Reference proteome</keyword>
<keyword id="KW-0899">Viral immunoevasion</keyword>
<keyword id="KW-0946">Virion</keyword>
<comment type="function">
    <text evidence="1">Serine/tyrosine phosphatase which down-regulates cellular antiviral response by dephosphorylating activated host STAT1 and blocking interferon (IFN)-stimulated innate immune responses. Dephosphorylates the OPG144 protein.</text>
</comment>
<comment type="catalytic activity">
    <reaction evidence="1">
        <text>O-phospho-L-tyrosyl-[protein] + H2O = L-tyrosyl-[protein] + phosphate</text>
        <dbReference type="Rhea" id="RHEA:10684"/>
        <dbReference type="Rhea" id="RHEA-COMP:10136"/>
        <dbReference type="Rhea" id="RHEA-COMP:20101"/>
        <dbReference type="ChEBI" id="CHEBI:15377"/>
        <dbReference type="ChEBI" id="CHEBI:43474"/>
        <dbReference type="ChEBI" id="CHEBI:46858"/>
        <dbReference type="ChEBI" id="CHEBI:61978"/>
        <dbReference type="EC" id="3.1.3.48"/>
    </reaction>
</comment>
<comment type="catalytic activity">
    <reaction evidence="1">
        <text>O-phospho-L-seryl-[protein] + H2O = L-seryl-[protein] + phosphate</text>
        <dbReference type="Rhea" id="RHEA:20629"/>
        <dbReference type="Rhea" id="RHEA-COMP:9863"/>
        <dbReference type="Rhea" id="RHEA-COMP:11604"/>
        <dbReference type="ChEBI" id="CHEBI:15377"/>
        <dbReference type="ChEBI" id="CHEBI:29999"/>
        <dbReference type="ChEBI" id="CHEBI:43474"/>
        <dbReference type="ChEBI" id="CHEBI:83421"/>
    </reaction>
</comment>
<comment type="subunit">
    <text evidence="1">Homodimer.</text>
</comment>
<comment type="subcellular location">
    <subcellularLocation>
        <location evidence="1">Virion</location>
    </subcellularLocation>
    <subcellularLocation>
        <location evidence="1">Host cytoplasm</location>
    </subcellularLocation>
    <text evidence="1">Approximately 200 molecules of OPG106 are packaged within the virion and are essential for the viability of the virus.</text>
</comment>
<comment type="similarity">
    <text evidence="2">Belongs to the protein-tyrosine phosphatase family. Non-receptor class dual specificity subfamily.</text>
</comment>
<accession>A0A7H0DN78</accession>
<feature type="chain" id="PRO_0000457419" description="Dual specificity protein phosphatase OPG106">
    <location>
        <begin position="1"/>
        <end position="171"/>
    </location>
</feature>
<feature type="helix" evidence="3">
    <location>
        <begin position="3"/>
        <end position="13"/>
    </location>
</feature>
<feature type="turn" evidence="3">
    <location>
        <begin position="14"/>
        <end position="16"/>
    </location>
</feature>
<feature type="strand" evidence="3">
    <location>
        <begin position="31"/>
        <end position="37"/>
    </location>
</feature>
<feature type="helix" evidence="3">
    <location>
        <begin position="39"/>
        <end position="44"/>
    </location>
</feature>
<feature type="helix" evidence="3">
    <location>
        <begin position="45"/>
        <end position="47"/>
    </location>
</feature>
<feature type="strand" evidence="3">
    <location>
        <begin position="48"/>
        <end position="50"/>
    </location>
</feature>
<feature type="strand" evidence="3">
    <location>
        <begin position="53"/>
        <end position="57"/>
    </location>
</feature>
<feature type="strand" evidence="3">
    <location>
        <begin position="59"/>
        <end position="61"/>
    </location>
</feature>
<feature type="strand" evidence="3">
    <location>
        <begin position="71"/>
        <end position="74"/>
    </location>
</feature>
<feature type="helix" evidence="3">
    <location>
        <begin position="85"/>
        <end position="88"/>
    </location>
</feature>
<feature type="helix" evidence="3">
    <location>
        <begin position="89"/>
        <end position="102"/>
    </location>
</feature>
<feature type="strand" evidence="3">
    <location>
        <begin position="106"/>
        <end position="109"/>
    </location>
</feature>
<feature type="strand" evidence="3">
    <location>
        <begin position="111"/>
        <end position="115"/>
    </location>
</feature>
<feature type="helix" evidence="3">
    <location>
        <begin position="116"/>
        <end position="128"/>
    </location>
</feature>
<feature type="helix" evidence="3">
    <location>
        <begin position="134"/>
        <end position="149"/>
    </location>
</feature>
<feature type="helix" evidence="3">
    <location>
        <begin position="156"/>
        <end position="166"/>
    </location>
</feature>
<organismHost>
    <name type="scientific">Cynomys gunnisoni</name>
    <name type="common">Gunnison's prairie dog</name>
    <name type="synonym">Spermophilus gunnisoni</name>
    <dbReference type="NCBI Taxonomy" id="45479"/>
</organismHost>
<organismHost>
    <name type="scientific">Cynomys leucurus</name>
    <name type="common">White-tailed prairie dog</name>
    <dbReference type="NCBI Taxonomy" id="99825"/>
</organismHost>
<organismHost>
    <name type="scientific">Cynomys ludovicianus</name>
    <name type="common">Black-tailed prairie dog</name>
    <dbReference type="NCBI Taxonomy" id="45480"/>
</organismHost>
<organismHost>
    <name type="scientific">Cynomys mexicanus</name>
    <name type="common">Mexican prairie dog</name>
    <dbReference type="NCBI Taxonomy" id="99826"/>
</organismHost>
<organismHost>
    <name type="scientific">Cynomys parvidens</name>
    <name type="common">Utah prairie dog</name>
    <dbReference type="NCBI Taxonomy" id="99827"/>
</organismHost>
<organismHost>
    <name type="scientific">Gliridae</name>
    <name type="common">dormice</name>
    <dbReference type="NCBI Taxonomy" id="30650"/>
</organismHost>
<organismHost>
    <name type="scientific">Heliosciurus ruwenzorii</name>
    <name type="common">Ruwenzori sun squirrel</name>
    <dbReference type="NCBI Taxonomy" id="226685"/>
</organismHost>
<organismHost>
    <name type="scientific">Homo sapiens</name>
    <name type="common">Human</name>
    <dbReference type="NCBI Taxonomy" id="9606"/>
</organismHost>
<organismHost>
    <name type="scientific">Mus musculus</name>
    <name type="common">Mouse</name>
    <dbReference type="NCBI Taxonomy" id="10090"/>
</organismHost>